<dbReference type="EMBL" id="AF548461">
    <property type="protein sequence ID" value="AAO43563.1"/>
    <property type="molecule type" value="Genomic_DNA"/>
</dbReference>
<dbReference type="EMBL" id="AF272705">
    <property type="status" value="NOT_ANNOTATED_CDS"/>
    <property type="molecule type" value="Genomic_DNA"/>
</dbReference>
<dbReference type="EMBL" id="CP002688">
    <property type="protein sequence ID" value="AED93822.1"/>
    <property type="molecule type" value="Genomic_DNA"/>
</dbReference>
<dbReference type="EMBL" id="CP002688">
    <property type="protein sequence ID" value="AED93823.1"/>
    <property type="molecule type" value="Genomic_DNA"/>
</dbReference>
<dbReference type="RefSeq" id="NP_001154744.1">
    <property type="nucleotide sequence ID" value="NM_001161272.2"/>
</dbReference>
<dbReference type="RefSeq" id="NP_680247.4">
    <property type="nucleotide sequence ID" value="NM_147942.4"/>
</dbReference>
<dbReference type="SMR" id="Q84ZT9"/>
<dbReference type="STRING" id="3702.Q84ZT9"/>
<dbReference type="PaxDb" id="3702-AT5G28646.1"/>
<dbReference type="ProteomicsDB" id="242662"/>
<dbReference type="DNASU" id="832970"/>
<dbReference type="EnsemblPlants" id="AT5G28646.1">
    <property type="protein sequence ID" value="AT5G28646.1"/>
    <property type="gene ID" value="AT5G28646"/>
</dbReference>
<dbReference type="EnsemblPlants" id="AT5G28646.2">
    <property type="protein sequence ID" value="AT5G28646.2"/>
    <property type="gene ID" value="AT5G28646"/>
</dbReference>
<dbReference type="GeneID" id="832970"/>
<dbReference type="Gramene" id="AT5G28646.1">
    <property type="protein sequence ID" value="AT5G28646.1"/>
    <property type="gene ID" value="AT5G28646"/>
</dbReference>
<dbReference type="Gramene" id="AT5G28646.2">
    <property type="protein sequence ID" value="AT5G28646.2"/>
    <property type="gene ID" value="AT5G28646"/>
</dbReference>
<dbReference type="KEGG" id="ath:AT5G28646"/>
<dbReference type="Araport" id="AT5G28646"/>
<dbReference type="TAIR" id="AT5G28646">
    <property type="gene designation" value="WVD2"/>
</dbReference>
<dbReference type="eggNOG" id="ENOG502RERJ">
    <property type="taxonomic scope" value="Eukaryota"/>
</dbReference>
<dbReference type="HOGENOM" id="CLU_1157835_0_0_1"/>
<dbReference type="InParanoid" id="Q84ZT9"/>
<dbReference type="OMA" id="VITNYCI"/>
<dbReference type="PhylomeDB" id="Q84ZT9"/>
<dbReference type="PRO" id="PR:Q84ZT9"/>
<dbReference type="Proteomes" id="UP000006548">
    <property type="component" value="Chromosome 5"/>
</dbReference>
<dbReference type="ExpressionAtlas" id="Q84ZT9">
    <property type="expression patterns" value="baseline and differential"/>
</dbReference>
<dbReference type="GO" id="GO:0055028">
    <property type="term" value="C:cortical microtubule"/>
    <property type="evidence" value="ECO:0000314"/>
    <property type="project" value="TAIR"/>
</dbReference>
<dbReference type="GO" id="GO:0008017">
    <property type="term" value="F:microtubule binding"/>
    <property type="evidence" value="ECO:0007669"/>
    <property type="project" value="InterPro"/>
</dbReference>
<dbReference type="GO" id="GO:0007163">
    <property type="term" value="P:establishment or maintenance of cell polarity"/>
    <property type="evidence" value="ECO:0000315"/>
    <property type="project" value="TAIR"/>
</dbReference>
<dbReference type="GO" id="GO:0001578">
    <property type="term" value="P:microtubule bundle formation"/>
    <property type="evidence" value="ECO:0000315"/>
    <property type="project" value="TAIR"/>
</dbReference>
<dbReference type="GO" id="GO:0000226">
    <property type="term" value="P:microtubule cytoskeleton organization"/>
    <property type="evidence" value="ECO:0000315"/>
    <property type="project" value="TAIR"/>
</dbReference>
<dbReference type="GO" id="GO:0009825">
    <property type="term" value="P:multidimensional cell growth"/>
    <property type="evidence" value="ECO:0000315"/>
    <property type="project" value="TAIR"/>
</dbReference>
<dbReference type="GO" id="GO:0010091">
    <property type="term" value="P:trichome branching"/>
    <property type="evidence" value="ECO:0000315"/>
    <property type="project" value="TAIR"/>
</dbReference>
<dbReference type="InterPro" id="IPR027329">
    <property type="entry name" value="TPX2_C"/>
</dbReference>
<dbReference type="InterPro" id="IPR044806">
    <property type="entry name" value="WVD2/WDL1-4"/>
</dbReference>
<dbReference type="PANTHER" id="PTHR46372:SF25">
    <property type="entry name" value="PROTEIN WAVE-DAMPENED 2"/>
    <property type="match status" value="1"/>
</dbReference>
<dbReference type="PANTHER" id="PTHR46372">
    <property type="entry name" value="PROTEIN WVD2-LIKE 3"/>
    <property type="match status" value="1"/>
</dbReference>
<dbReference type="Pfam" id="PF06886">
    <property type="entry name" value="TPX2"/>
    <property type="match status" value="1"/>
</dbReference>
<name>WVD2_ARATH</name>
<accession>Q84ZT9</accession>
<sequence>MRREVFESVSTNASNERVHVAPKIAAEEQDYEEKECTEENSLSQNHKSSNVITENDSKKKNLDEEDDCSVASSMKNAKSKVTHGTAPRFRSAQRAEKRKEYYQKLEEKHQALEAERIELEQRQKEEQEAAIKQLRKNLKFKANPVPDFYYQRPPVKPELKKFPLTRPKSPKLNLSRRKSCSDAITSSGEENSNSQNRQSVVE</sequence>
<protein>
    <recommendedName>
        <fullName>Protein WAVE-DAMPENED 2</fullName>
        <shortName>AtWVD2</shortName>
    </recommendedName>
</protein>
<comment type="function">
    <text evidence="3 4">Microtubule-associated protein (MAP) that regulates the orientation of interphase cortical microtubules. Able to bundle microtubules in vitro. Modulates both rotational polarity and anisotropic cell expansion during organ growth. Promotes clockwise root and etiolated hypocotyls coiling, clockwise leaf curling, but left-handed petiole twisting.</text>
</comment>
<comment type="subcellular location">
    <subcellularLocation>
        <location evidence="4">Cytoplasm</location>
        <location evidence="4">Cytoskeleton</location>
    </subcellularLocation>
</comment>
<comment type="tissue specificity">
    <text evidence="3">Expressed in seedlings, cotyledons, hypocotyls, roots, leaves, flowers, inflorescence stems and siliques.</text>
</comment>
<comment type="similarity">
    <text evidence="5">Belongs to the TPX2 family.</text>
</comment>
<keyword id="KW-0175">Coiled coil</keyword>
<keyword id="KW-0963">Cytoplasm</keyword>
<keyword id="KW-0206">Cytoskeleton</keyword>
<keyword id="KW-0493">Microtubule</keyword>
<keyword id="KW-1185">Reference proteome</keyword>
<proteinExistence type="evidence at transcript level"/>
<organism>
    <name type="scientific">Arabidopsis thaliana</name>
    <name type="common">Mouse-ear cress</name>
    <dbReference type="NCBI Taxonomy" id="3702"/>
    <lineage>
        <taxon>Eukaryota</taxon>
        <taxon>Viridiplantae</taxon>
        <taxon>Streptophyta</taxon>
        <taxon>Embryophyta</taxon>
        <taxon>Tracheophyta</taxon>
        <taxon>Spermatophyta</taxon>
        <taxon>Magnoliopsida</taxon>
        <taxon>eudicotyledons</taxon>
        <taxon>Gunneridae</taxon>
        <taxon>Pentapetalae</taxon>
        <taxon>rosids</taxon>
        <taxon>malvids</taxon>
        <taxon>Brassicales</taxon>
        <taxon>Brassicaceae</taxon>
        <taxon>Camelineae</taxon>
        <taxon>Arabidopsis</taxon>
    </lineage>
</organism>
<reference key="1">
    <citation type="journal article" date="2003" name="Plant Physiol.">
        <title>WVD2 and WDL1 modulate helical organ growth and anisotropic cell expansion in Arabidopsis.</title>
        <authorList>
            <person name="Yuen C.Y."/>
            <person name="Pearlman R.S."/>
            <person name="Silo-Suh L."/>
            <person name="Hilson P."/>
            <person name="Carroll K.L."/>
            <person name="Masson P.H."/>
        </authorList>
    </citation>
    <scope>NUCLEOTIDE SEQUENCE [GENOMIC DNA]</scope>
    <scope>FUNCTION</scope>
    <scope>TISSUE SPECIFICITY</scope>
    <source>
        <strain>cv. Columbia</strain>
    </source>
</reference>
<reference key="2">
    <citation type="journal article" date="2000" name="Nature">
        <title>Sequence and analysis of chromosome 5 of the plant Arabidopsis thaliana.</title>
        <authorList>
            <person name="Tabata S."/>
            <person name="Kaneko T."/>
            <person name="Nakamura Y."/>
            <person name="Kotani H."/>
            <person name="Kato T."/>
            <person name="Asamizu E."/>
            <person name="Miyajima N."/>
            <person name="Sasamoto S."/>
            <person name="Kimura T."/>
            <person name="Hosouchi T."/>
            <person name="Kawashima K."/>
            <person name="Kohara M."/>
            <person name="Matsumoto M."/>
            <person name="Matsuno A."/>
            <person name="Muraki A."/>
            <person name="Nakayama S."/>
            <person name="Nakazaki N."/>
            <person name="Naruo K."/>
            <person name="Okumura S."/>
            <person name="Shinpo S."/>
            <person name="Takeuchi C."/>
            <person name="Wada T."/>
            <person name="Watanabe A."/>
            <person name="Yamada M."/>
            <person name="Yasuda M."/>
            <person name="Sato S."/>
            <person name="de la Bastide M."/>
            <person name="Huang E."/>
            <person name="Spiegel L."/>
            <person name="Gnoj L."/>
            <person name="O'Shaughnessy A."/>
            <person name="Preston R."/>
            <person name="Habermann K."/>
            <person name="Murray J."/>
            <person name="Johnson D."/>
            <person name="Rohlfing T."/>
            <person name="Nelson J."/>
            <person name="Stoneking T."/>
            <person name="Pepin K."/>
            <person name="Spieth J."/>
            <person name="Sekhon M."/>
            <person name="Armstrong J."/>
            <person name="Becker M."/>
            <person name="Belter E."/>
            <person name="Cordum H."/>
            <person name="Cordes M."/>
            <person name="Courtney L."/>
            <person name="Courtney W."/>
            <person name="Dante M."/>
            <person name="Du H."/>
            <person name="Edwards J."/>
            <person name="Fryman J."/>
            <person name="Haakensen B."/>
            <person name="Lamar E."/>
            <person name="Latreille P."/>
            <person name="Leonard S."/>
            <person name="Meyer R."/>
            <person name="Mulvaney E."/>
            <person name="Ozersky P."/>
            <person name="Riley A."/>
            <person name="Strowmatt C."/>
            <person name="Wagner-McPherson C."/>
            <person name="Wollam A."/>
            <person name="Yoakum M."/>
            <person name="Bell M."/>
            <person name="Dedhia N."/>
            <person name="Parnell L."/>
            <person name="Shah R."/>
            <person name="Rodriguez M."/>
            <person name="Hoon See L."/>
            <person name="Vil D."/>
            <person name="Baker J."/>
            <person name="Kirchoff K."/>
            <person name="Toth K."/>
            <person name="King L."/>
            <person name="Bahret A."/>
            <person name="Miller B."/>
            <person name="Marra M.A."/>
            <person name="Martienssen R."/>
            <person name="McCombie W.R."/>
            <person name="Wilson R.K."/>
            <person name="Murphy G."/>
            <person name="Bancroft I."/>
            <person name="Volckaert G."/>
            <person name="Wambutt R."/>
            <person name="Duesterhoeft A."/>
            <person name="Stiekema W."/>
            <person name="Pohl T."/>
            <person name="Entian K.-D."/>
            <person name="Terryn N."/>
            <person name="Hartley N."/>
            <person name="Bent E."/>
            <person name="Johnson S."/>
            <person name="Langham S.-A."/>
            <person name="McCullagh B."/>
            <person name="Robben J."/>
            <person name="Grymonprez B."/>
            <person name="Zimmermann W."/>
            <person name="Ramsperger U."/>
            <person name="Wedler H."/>
            <person name="Balke K."/>
            <person name="Wedler E."/>
            <person name="Peters S."/>
            <person name="van Staveren M."/>
            <person name="Dirkse W."/>
            <person name="Mooijman P."/>
            <person name="Klein Lankhorst R."/>
            <person name="Weitzenegger T."/>
            <person name="Bothe G."/>
            <person name="Rose M."/>
            <person name="Hauf J."/>
            <person name="Berneiser S."/>
            <person name="Hempel S."/>
            <person name="Feldpausch M."/>
            <person name="Lamberth S."/>
            <person name="Villarroel R."/>
            <person name="Gielen J."/>
            <person name="Ardiles W."/>
            <person name="Bents O."/>
            <person name="Lemcke K."/>
            <person name="Kolesov G."/>
            <person name="Mayer K.F.X."/>
            <person name="Rudd S."/>
            <person name="Schoof H."/>
            <person name="Schueller C."/>
            <person name="Zaccaria P."/>
            <person name="Mewes H.-W."/>
            <person name="Bevan M."/>
            <person name="Fransz P.F."/>
        </authorList>
    </citation>
    <scope>NUCLEOTIDE SEQUENCE [LARGE SCALE GENOMIC DNA]</scope>
    <source>
        <strain>cv. Columbia</strain>
    </source>
</reference>
<reference key="3">
    <citation type="journal article" date="2017" name="Plant J.">
        <title>Araport11: a complete reannotation of the Arabidopsis thaliana reference genome.</title>
        <authorList>
            <person name="Cheng C.Y."/>
            <person name="Krishnakumar V."/>
            <person name="Chan A.P."/>
            <person name="Thibaud-Nissen F."/>
            <person name="Schobel S."/>
            <person name="Town C.D."/>
        </authorList>
    </citation>
    <scope>GENOME REANNOTATION</scope>
    <source>
        <strain>cv. Columbia</strain>
    </source>
</reference>
<reference key="4">
    <citation type="journal article" date="2007" name="Plant J.">
        <title>WVD2 is a novel microtubule-associated protein in Arabidopsis thaliana.</title>
        <authorList>
            <person name="Perrin R.M."/>
            <person name="Wang Y."/>
            <person name="Yuen C.Y."/>
            <person name="Will J."/>
            <person name="Masson P.H."/>
        </authorList>
    </citation>
    <scope>FUNCTION</scope>
    <scope>SUBCELLULAR LOCATION</scope>
</reference>
<gene>
    <name type="primary">WVD2</name>
    <name type="ordered locus">At5g28646</name>
    <name type="ORF">F4I4</name>
</gene>
<feature type="chain" id="PRO_0000420701" description="Protein WAVE-DAMPENED 2">
    <location>
        <begin position="1"/>
        <end position="202"/>
    </location>
</feature>
<feature type="region of interest" description="Disordered" evidence="2">
    <location>
        <begin position="1"/>
        <end position="97"/>
    </location>
</feature>
<feature type="region of interest" description="Disordered" evidence="2">
    <location>
        <begin position="142"/>
        <end position="202"/>
    </location>
</feature>
<feature type="coiled-coil region" evidence="1">
    <location>
        <begin position="92"/>
        <end position="143"/>
    </location>
</feature>
<feature type="compositionally biased region" description="Acidic residues" evidence="2">
    <location>
        <begin position="27"/>
        <end position="38"/>
    </location>
</feature>
<feature type="compositionally biased region" description="Polar residues" evidence="2">
    <location>
        <begin position="39"/>
        <end position="54"/>
    </location>
</feature>
<feature type="compositionally biased region" description="Polar residues" evidence="2">
    <location>
        <begin position="182"/>
        <end position="202"/>
    </location>
</feature>
<evidence type="ECO:0000255" key="1"/>
<evidence type="ECO:0000256" key="2">
    <source>
        <dbReference type="SAM" id="MobiDB-lite"/>
    </source>
</evidence>
<evidence type="ECO:0000269" key="3">
    <source>
    </source>
</evidence>
<evidence type="ECO:0000269" key="4">
    <source>
    </source>
</evidence>
<evidence type="ECO:0000305" key="5"/>